<name>NARG_BACSU</name>
<evidence type="ECO:0000250" key="1"/>
<evidence type="ECO:0000255" key="2">
    <source>
        <dbReference type="PROSITE-ProRule" id="PRU01004"/>
    </source>
</evidence>
<evidence type="ECO:0000305" key="3"/>
<accession>P42175</accession>
<feature type="chain" id="PRO_0000063232" description="Nitrate reductase alpha chain">
    <location>
        <begin position="1"/>
        <end position="1228"/>
    </location>
</feature>
<feature type="domain" description="4Fe-4S Mo/W bis-MGD-type" evidence="2">
    <location>
        <begin position="47"/>
        <end position="111"/>
    </location>
</feature>
<feature type="binding site" evidence="2">
    <location>
        <position position="54"/>
    </location>
    <ligand>
        <name>[4Fe-4S] cluster</name>
        <dbReference type="ChEBI" id="CHEBI:49883"/>
    </ligand>
</feature>
<feature type="binding site" evidence="2">
    <location>
        <position position="58"/>
    </location>
    <ligand>
        <name>[4Fe-4S] cluster</name>
        <dbReference type="ChEBI" id="CHEBI:49883"/>
    </ligand>
</feature>
<feature type="binding site" evidence="2">
    <location>
        <position position="62"/>
    </location>
    <ligand>
        <name>[4Fe-4S] cluster</name>
        <dbReference type="ChEBI" id="CHEBI:49883"/>
    </ligand>
</feature>
<feature type="binding site" evidence="2">
    <location>
        <position position="97"/>
    </location>
    <ligand>
        <name>[4Fe-4S] cluster</name>
        <dbReference type="ChEBI" id="CHEBI:49883"/>
    </ligand>
</feature>
<feature type="binding site" evidence="1">
    <location>
        <position position="227"/>
    </location>
    <ligand>
        <name>Mo-bis(molybdopterin guanine dinucleotide)</name>
        <dbReference type="ChEBI" id="CHEBI:60539"/>
    </ligand>
    <ligandPart>
        <name>Mo</name>
        <dbReference type="ChEBI" id="CHEBI:28685"/>
    </ligandPart>
</feature>
<feature type="sequence conflict" description="In Ref. 1; CAA90045." evidence="3" ref="1">
    <original>D</original>
    <variation>T</variation>
    <location>
        <position position="47"/>
    </location>
</feature>
<dbReference type="EC" id="1.7.5.1"/>
<dbReference type="EMBL" id="Z49884">
    <property type="protein sequence ID" value="CAA90045.1"/>
    <property type="molecule type" value="Genomic_DNA"/>
</dbReference>
<dbReference type="EMBL" id="X91819">
    <property type="protein sequence ID" value="CAA62926.1"/>
    <property type="molecule type" value="Genomic_DNA"/>
</dbReference>
<dbReference type="EMBL" id="X85014">
    <property type="protein sequence ID" value="CAA59371.1"/>
    <property type="molecule type" value="Genomic_DNA"/>
</dbReference>
<dbReference type="EMBL" id="AL009126">
    <property type="protein sequence ID" value="CAB15756.2"/>
    <property type="molecule type" value="Genomic_DNA"/>
</dbReference>
<dbReference type="PIR" id="S60085">
    <property type="entry name" value="S60085"/>
</dbReference>
<dbReference type="RefSeq" id="NP_391609.2">
    <property type="nucleotide sequence ID" value="NC_000964.3"/>
</dbReference>
<dbReference type="RefSeq" id="WP_003243085.1">
    <property type="nucleotide sequence ID" value="NZ_OZ025638.1"/>
</dbReference>
<dbReference type="SMR" id="P42175"/>
<dbReference type="FunCoup" id="P42175">
    <property type="interactions" value="144"/>
</dbReference>
<dbReference type="STRING" id="224308.BSU37280"/>
<dbReference type="jPOST" id="P42175"/>
<dbReference type="PaxDb" id="224308-BSU37280"/>
<dbReference type="EnsemblBacteria" id="CAB15756">
    <property type="protein sequence ID" value="CAB15756"/>
    <property type="gene ID" value="BSU_37280"/>
</dbReference>
<dbReference type="GeneID" id="938358"/>
<dbReference type="KEGG" id="bsu:BSU37280"/>
<dbReference type="PATRIC" id="fig|224308.179.peg.4039"/>
<dbReference type="eggNOG" id="COG5013">
    <property type="taxonomic scope" value="Bacteria"/>
</dbReference>
<dbReference type="InParanoid" id="P42175"/>
<dbReference type="OrthoDB" id="9759518at2"/>
<dbReference type="PhylomeDB" id="P42175"/>
<dbReference type="BioCyc" id="BSUB:BSU37280-MONOMER"/>
<dbReference type="PRO" id="PR:P42175"/>
<dbReference type="Proteomes" id="UP000001570">
    <property type="component" value="Chromosome"/>
</dbReference>
<dbReference type="GO" id="GO:0016020">
    <property type="term" value="C:membrane"/>
    <property type="evidence" value="ECO:0000318"/>
    <property type="project" value="GO_Central"/>
</dbReference>
<dbReference type="GO" id="GO:0009325">
    <property type="term" value="C:nitrate reductase complex"/>
    <property type="evidence" value="ECO:0007669"/>
    <property type="project" value="InterPro"/>
</dbReference>
<dbReference type="GO" id="GO:0005886">
    <property type="term" value="C:plasma membrane"/>
    <property type="evidence" value="ECO:0007669"/>
    <property type="project" value="UniProtKB-SubCell"/>
</dbReference>
<dbReference type="GO" id="GO:0051539">
    <property type="term" value="F:4 iron, 4 sulfur cluster binding"/>
    <property type="evidence" value="ECO:0007669"/>
    <property type="project" value="UniProtKB-KW"/>
</dbReference>
<dbReference type="GO" id="GO:0046872">
    <property type="term" value="F:metal ion binding"/>
    <property type="evidence" value="ECO:0007669"/>
    <property type="project" value="UniProtKB-KW"/>
</dbReference>
<dbReference type="GO" id="GO:0043546">
    <property type="term" value="F:molybdopterin cofactor binding"/>
    <property type="evidence" value="ECO:0007669"/>
    <property type="project" value="InterPro"/>
</dbReference>
<dbReference type="GO" id="GO:0160182">
    <property type="term" value="F:nitrate reductase (quinone) activity"/>
    <property type="evidence" value="ECO:0007669"/>
    <property type="project" value="UniProtKB-EC"/>
</dbReference>
<dbReference type="GO" id="GO:0042128">
    <property type="term" value="P:nitrate assimilation"/>
    <property type="evidence" value="ECO:0007669"/>
    <property type="project" value="UniProtKB-KW"/>
</dbReference>
<dbReference type="CDD" id="cd02776">
    <property type="entry name" value="MopB_CT_Nitrate-R-NarG-like"/>
    <property type="match status" value="1"/>
</dbReference>
<dbReference type="CDD" id="cd02750">
    <property type="entry name" value="MopB_Nitrate-R-NarG-like"/>
    <property type="match status" value="1"/>
</dbReference>
<dbReference type="FunFam" id="3.40.50.12440:FF:000001">
    <property type="entry name" value="Nitrate reductase subunit alpha"/>
    <property type="match status" value="1"/>
</dbReference>
<dbReference type="Gene3D" id="3.40.50.12440">
    <property type="match status" value="1"/>
</dbReference>
<dbReference type="Gene3D" id="4.10.1200.10">
    <property type="entry name" value="nitrate reductase tail"/>
    <property type="match status" value="1"/>
</dbReference>
<dbReference type="InterPro" id="IPR009010">
    <property type="entry name" value="Asp_de-COase-like_dom_sf"/>
</dbReference>
<dbReference type="InterPro" id="IPR037943">
    <property type="entry name" value="MopB_CT_Nitrate-R-NarG-like"/>
</dbReference>
<dbReference type="InterPro" id="IPR006657">
    <property type="entry name" value="MoPterin_dinucl-bd_dom"/>
</dbReference>
<dbReference type="InterPro" id="IPR006656">
    <property type="entry name" value="Mopterin_OxRdtase"/>
</dbReference>
<dbReference type="InterPro" id="IPR006963">
    <property type="entry name" value="Mopterin_OxRdtase_4Fe-4S_dom"/>
</dbReference>
<dbReference type="InterPro" id="IPR006655">
    <property type="entry name" value="Mopterin_OxRdtase_prok_CS"/>
</dbReference>
<dbReference type="InterPro" id="IPR027467">
    <property type="entry name" value="MopterinOxRdtase_cofactor_BS"/>
</dbReference>
<dbReference type="InterPro" id="IPR006468">
    <property type="entry name" value="NarG"/>
</dbReference>
<dbReference type="InterPro" id="IPR028189">
    <property type="entry name" value="Nitr_red_alph_N"/>
</dbReference>
<dbReference type="InterPro" id="IPR044906">
    <property type="entry name" value="Nitr_red_alph_N_sf"/>
</dbReference>
<dbReference type="InterPro" id="IPR050123">
    <property type="entry name" value="Prok_molybdopt-oxidoreductase"/>
</dbReference>
<dbReference type="NCBIfam" id="TIGR01580">
    <property type="entry name" value="narG"/>
    <property type="match status" value="1"/>
</dbReference>
<dbReference type="PANTHER" id="PTHR43105">
    <property type="entry name" value="RESPIRATORY NITRATE REDUCTASE"/>
    <property type="match status" value="1"/>
</dbReference>
<dbReference type="PANTHER" id="PTHR43105:SF2">
    <property type="entry name" value="RESPIRATORY NITRATE REDUCTASE 2 ALPHA CHAIN"/>
    <property type="match status" value="1"/>
</dbReference>
<dbReference type="Pfam" id="PF00384">
    <property type="entry name" value="Molybdopterin"/>
    <property type="match status" value="1"/>
</dbReference>
<dbReference type="Pfam" id="PF01568">
    <property type="entry name" value="Molydop_binding"/>
    <property type="match status" value="1"/>
</dbReference>
<dbReference type="Pfam" id="PF14710">
    <property type="entry name" value="Nitr_red_alph_N"/>
    <property type="match status" value="1"/>
</dbReference>
<dbReference type="SMART" id="SM00926">
    <property type="entry name" value="Molybdop_Fe4S4"/>
    <property type="match status" value="1"/>
</dbReference>
<dbReference type="SUPFAM" id="SSF50692">
    <property type="entry name" value="ADC-like"/>
    <property type="match status" value="1"/>
</dbReference>
<dbReference type="SUPFAM" id="SSF53706">
    <property type="entry name" value="Formate dehydrogenase/DMSO reductase, domains 1-3"/>
    <property type="match status" value="1"/>
</dbReference>
<dbReference type="PROSITE" id="PS51669">
    <property type="entry name" value="4FE4S_MOW_BIS_MGD"/>
    <property type="match status" value="1"/>
</dbReference>
<dbReference type="PROSITE" id="PS00551">
    <property type="entry name" value="MOLYBDOPTERIN_PROK_1"/>
    <property type="match status" value="1"/>
</dbReference>
<dbReference type="PROSITE" id="PS00490">
    <property type="entry name" value="MOLYBDOPTERIN_PROK_2"/>
    <property type="match status" value="1"/>
</dbReference>
<dbReference type="PROSITE" id="PS00932">
    <property type="entry name" value="MOLYBDOPTERIN_PROK_3"/>
    <property type="match status" value="1"/>
</dbReference>
<protein>
    <recommendedName>
        <fullName>Nitrate reductase alpha chain</fullName>
        <ecNumber>1.7.5.1</ecNumber>
    </recommendedName>
</protein>
<sequence length="1228" mass="139099">MKKKKRSPLFRRLNYFSPIEHHSNKHSQTTREDRDWENVYRNRWQYDKVVRSTHGVNCTGSCSWNIYVKNGIVTWEGQNLNYPSTGPDMPDFEPRGCPRGASFSWYIYSPLRVKYPYVRGVLINLWREALQTHQNPLEAWKSIVENPEKAKSYKQARGKGGFVRAEWPEVLKLISASLLYTVMKYGPDRNVGFSPIPAMSMISHASGSRFMSLIGGPMLSFYDWYADLPPASPQIWGDQTDVPESSDWYNSGYIITWGSNVPLTRTPDAHFLAEARYKGAKVISISPDFAESSKFADDWLSIRQGTDGALAMAMGHVILQEFYVNQETERFIEYAKQYTDFPFLVTLSKENGVYTAGRFLHAKDIGRKTKHDQWKPAVWDEQTSSFAIPQGTMGSRWDGQQKWNLHMIDEETGEPIEPRLSVLGIEDEIGTVRIPYFSNDGNKVLERDLPIKKMNLNGEETYITTVFDLILANYGVNRGIGERSAVSYDDPEPFTPAWQEQMTGIKKEAVVKIAREFAQNAIDTDGRSMIIVGAGINHWFNSDTIYRAVLNLVLLVGAQGVNGGGWAHYVGQEKLRPAEGWQTIATAKDWEGVPKLQNGTSFFYFATDQWRYEDQPISDLASPIAASSRYKHHADYNVLAARLGWLPSYPTFNQNGIDLYKEAEKAGAATPEDVGAYVASQLQEKKLKFAIEDPDNEVNFPRNLFVWRANLISSSGKGHEYFLKHLLGTTNGLMNDDSDSIRPEEIKWREQAPEGKLDLLINLDFRMAGTALYSDIVLPAATWYEKHDLSSTDMHPFIHPFAPAISAPWESKSDWDIFKALSKAVSDLAEEVDMEPVKEVVATPLLHDTMQELAQPFGKINDWSKGECEAIPGKTMPNIQVVERDYKHIFHKMTALGPNVALKPSGTKGMSWSIADEYESLKQRLGEITSDSVAKGCPNISEAKQAAEAILTLSSTSNGKVAVKAWESLENITNLKLKDLAEEREEECFTFEQITAQPKTVITSPAFTGSEKGGRRYSPFTTNVEKLIPWRTLTGRQSYYVDHELMMEFGETMATFKPILQHRPFLSKRPDQEGKEIVLNYLTPHNKWSVHSMYFDSLPMLTLFRGGPTVWMNKDDAEDTDIKDNDWIECFNRNGVVVARAVLSHRIPKGMAFMHHAQDRHINVPGTKLTNNRGGTHNSPTRIHVKPTQMIGGYAQLSYGFNYYGPTGNQRDLNVVIRKLKEVDWLED</sequence>
<organism>
    <name type="scientific">Bacillus subtilis (strain 168)</name>
    <dbReference type="NCBI Taxonomy" id="224308"/>
    <lineage>
        <taxon>Bacteria</taxon>
        <taxon>Bacillati</taxon>
        <taxon>Bacillota</taxon>
        <taxon>Bacilli</taxon>
        <taxon>Bacillales</taxon>
        <taxon>Bacillaceae</taxon>
        <taxon>Bacillus</taxon>
    </lineage>
</organism>
<comment type="function">
    <text>The alpha chain is the actual site of nitrate reduction.</text>
</comment>
<comment type="catalytic activity">
    <reaction>
        <text>nitrate + a quinol = a quinone + nitrite + H2O</text>
        <dbReference type="Rhea" id="RHEA:56144"/>
        <dbReference type="ChEBI" id="CHEBI:15377"/>
        <dbReference type="ChEBI" id="CHEBI:16301"/>
        <dbReference type="ChEBI" id="CHEBI:17632"/>
        <dbReference type="ChEBI" id="CHEBI:24646"/>
        <dbReference type="ChEBI" id="CHEBI:132124"/>
        <dbReference type="EC" id="1.7.5.1"/>
    </reaction>
</comment>
<comment type="cofactor">
    <cofactor evidence="1">
        <name>[4Fe-4S] cluster</name>
        <dbReference type="ChEBI" id="CHEBI:49883"/>
    </cofactor>
    <text evidence="1">Binds 1 [4Fe-4S] cluster per subunit.</text>
</comment>
<comment type="cofactor">
    <cofactor evidence="1">
        <name>Mo-bis(molybdopterin guanine dinucleotide)</name>
        <dbReference type="ChEBI" id="CHEBI:60539"/>
    </cofactor>
    <text evidence="1">Binds 1 molybdenum-bis(molybdopterin guanine dinucleotide) (Mo-bis-MGD) cofactor per subunit.</text>
</comment>
<comment type="subcellular location">
    <subcellularLocation>
        <location>Cell membrane</location>
        <topology>Peripheral membrane protein</topology>
    </subcellularLocation>
</comment>
<comment type="similarity">
    <text evidence="3">Belongs to the prokaryotic molybdopterin-containing oxidoreductase family.</text>
</comment>
<proteinExistence type="inferred from homology"/>
<keyword id="KW-0004">4Fe-4S</keyword>
<keyword id="KW-1003">Cell membrane</keyword>
<keyword id="KW-0249">Electron transport</keyword>
<keyword id="KW-0408">Iron</keyword>
<keyword id="KW-0411">Iron-sulfur</keyword>
<keyword id="KW-0472">Membrane</keyword>
<keyword id="KW-0479">Metal-binding</keyword>
<keyword id="KW-0500">Molybdenum</keyword>
<keyword id="KW-0534">Nitrate assimilation</keyword>
<keyword id="KW-0560">Oxidoreductase</keyword>
<keyword id="KW-1185">Reference proteome</keyword>
<keyword id="KW-0813">Transport</keyword>
<gene>
    <name type="primary">narG</name>
    <name type="ordered locus">BSU37280</name>
</gene>
<reference key="1">
    <citation type="journal article" date="1995" name="EMBO J.">
        <title>Anaerobic transcription activation in Bacillus subtilis: identification of distinct FNR-dependent and -independent regulatory mechanisms.</title>
        <authorList>
            <person name="Cruz Ramos H."/>
            <person name="Boursier L."/>
            <person name="Moszer I."/>
            <person name="Kunst F."/>
            <person name="Danchin A."/>
            <person name="Glaser P."/>
        </authorList>
    </citation>
    <scope>NUCLEOTIDE SEQUENCE [GENOMIC DNA]</scope>
</reference>
<reference key="2">
    <citation type="journal article" date="1997" name="Microbiology">
        <title>The Bacillus subtilis genome from gerBC (311 degrees) to licR (334 degrees).</title>
        <authorList>
            <person name="Presecan E."/>
            <person name="Moszer I."/>
            <person name="Boursier L."/>
            <person name="Cruz Ramos H."/>
            <person name="De La Fuente V."/>
            <person name="Hullo M.-F."/>
            <person name="Lelong C."/>
            <person name="Schleich S."/>
            <person name="Sekowska A."/>
            <person name="Song B.H."/>
            <person name="Villani G."/>
            <person name="Kunst F."/>
            <person name="Danchin A."/>
            <person name="Glaser P."/>
        </authorList>
    </citation>
    <scope>NUCLEOTIDE SEQUENCE [GENOMIC DNA]</scope>
    <source>
        <strain>168</strain>
    </source>
</reference>
<reference key="3">
    <citation type="journal article" date="1995" name="FEMS Microbiol. Lett.">
        <title>The anaerobic life of Bacillus subtilis: cloning of the genes encoding the respiratory nitrate reductase system.</title>
        <authorList>
            <person name="Hoffmann T."/>
            <person name="Troup B."/>
            <person name="Szabo A."/>
            <person name="Hungerer C."/>
            <person name="Jahn D."/>
        </authorList>
    </citation>
    <scope>NUCLEOTIDE SEQUENCE [GENOMIC DNA]</scope>
    <source>
        <strain>168 / JH642</strain>
    </source>
</reference>
<reference key="4">
    <citation type="journal article" date="1997" name="Nature">
        <title>The complete genome sequence of the Gram-positive bacterium Bacillus subtilis.</title>
        <authorList>
            <person name="Kunst F."/>
            <person name="Ogasawara N."/>
            <person name="Moszer I."/>
            <person name="Albertini A.M."/>
            <person name="Alloni G."/>
            <person name="Azevedo V."/>
            <person name="Bertero M.G."/>
            <person name="Bessieres P."/>
            <person name="Bolotin A."/>
            <person name="Borchert S."/>
            <person name="Borriss R."/>
            <person name="Boursier L."/>
            <person name="Brans A."/>
            <person name="Braun M."/>
            <person name="Brignell S.C."/>
            <person name="Bron S."/>
            <person name="Brouillet S."/>
            <person name="Bruschi C.V."/>
            <person name="Caldwell B."/>
            <person name="Capuano V."/>
            <person name="Carter N.M."/>
            <person name="Choi S.-K."/>
            <person name="Codani J.-J."/>
            <person name="Connerton I.F."/>
            <person name="Cummings N.J."/>
            <person name="Daniel R.A."/>
            <person name="Denizot F."/>
            <person name="Devine K.M."/>
            <person name="Duesterhoeft A."/>
            <person name="Ehrlich S.D."/>
            <person name="Emmerson P.T."/>
            <person name="Entian K.-D."/>
            <person name="Errington J."/>
            <person name="Fabret C."/>
            <person name="Ferrari E."/>
            <person name="Foulger D."/>
            <person name="Fritz C."/>
            <person name="Fujita M."/>
            <person name="Fujita Y."/>
            <person name="Fuma S."/>
            <person name="Galizzi A."/>
            <person name="Galleron N."/>
            <person name="Ghim S.-Y."/>
            <person name="Glaser P."/>
            <person name="Goffeau A."/>
            <person name="Golightly E.J."/>
            <person name="Grandi G."/>
            <person name="Guiseppi G."/>
            <person name="Guy B.J."/>
            <person name="Haga K."/>
            <person name="Haiech J."/>
            <person name="Harwood C.R."/>
            <person name="Henaut A."/>
            <person name="Hilbert H."/>
            <person name="Holsappel S."/>
            <person name="Hosono S."/>
            <person name="Hullo M.-F."/>
            <person name="Itaya M."/>
            <person name="Jones L.-M."/>
            <person name="Joris B."/>
            <person name="Karamata D."/>
            <person name="Kasahara Y."/>
            <person name="Klaerr-Blanchard M."/>
            <person name="Klein C."/>
            <person name="Kobayashi Y."/>
            <person name="Koetter P."/>
            <person name="Koningstein G."/>
            <person name="Krogh S."/>
            <person name="Kumano M."/>
            <person name="Kurita K."/>
            <person name="Lapidus A."/>
            <person name="Lardinois S."/>
            <person name="Lauber J."/>
            <person name="Lazarevic V."/>
            <person name="Lee S.-M."/>
            <person name="Levine A."/>
            <person name="Liu H."/>
            <person name="Masuda S."/>
            <person name="Mauel C."/>
            <person name="Medigue C."/>
            <person name="Medina N."/>
            <person name="Mellado R.P."/>
            <person name="Mizuno M."/>
            <person name="Moestl D."/>
            <person name="Nakai S."/>
            <person name="Noback M."/>
            <person name="Noone D."/>
            <person name="O'Reilly M."/>
            <person name="Ogawa K."/>
            <person name="Ogiwara A."/>
            <person name="Oudega B."/>
            <person name="Park S.-H."/>
            <person name="Parro V."/>
            <person name="Pohl T.M."/>
            <person name="Portetelle D."/>
            <person name="Porwollik S."/>
            <person name="Prescott A.M."/>
            <person name="Presecan E."/>
            <person name="Pujic P."/>
            <person name="Purnelle B."/>
            <person name="Rapoport G."/>
            <person name="Rey M."/>
            <person name="Reynolds S."/>
            <person name="Rieger M."/>
            <person name="Rivolta C."/>
            <person name="Rocha E."/>
            <person name="Roche B."/>
            <person name="Rose M."/>
            <person name="Sadaie Y."/>
            <person name="Sato T."/>
            <person name="Scanlan E."/>
            <person name="Schleich S."/>
            <person name="Schroeter R."/>
            <person name="Scoffone F."/>
            <person name="Sekiguchi J."/>
            <person name="Sekowska A."/>
            <person name="Seror S.J."/>
            <person name="Serror P."/>
            <person name="Shin B.-S."/>
            <person name="Soldo B."/>
            <person name="Sorokin A."/>
            <person name="Tacconi E."/>
            <person name="Takagi T."/>
            <person name="Takahashi H."/>
            <person name="Takemaru K."/>
            <person name="Takeuchi M."/>
            <person name="Tamakoshi A."/>
            <person name="Tanaka T."/>
            <person name="Terpstra P."/>
            <person name="Tognoni A."/>
            <person name="Tosato V."/>
            <person name="Uchiyama S."/>
            <person name="Vandenbol M."/>
            <person name="Vannier F."/>
            <person name="Vassarotti A."/>
            <person name="Viari A."/>
            <person name="Wambutt R."/>
            <person name="Wedler E."/>
            <person name="Wedler H."/>
            <person name="Weitzenegger T."/>
            <person name="Winters P."/>
            <person name="Wipat A."/>
            <person name="Yamamoto H."/>
            <person name="Yamane K."/>
            <person name="Yasumoto K."/>
            <person name="Yata K."/>
            <person name="Yoshida K."/>
            <person name="Yoshikawa H.-F."/>
            <person name="Zumstein E."/>
            <person name="Yoshikawa H."/>
            <person name="Danchin A."/>
        </authorList>
    </citation>
    <scope>NUCLEOTIDE SEQUENCE [LARGE SCALE GENOMIC DNA]</scope>
    <source>
        <strain>168</strain>
    </source>
</reference>
<reference key="5">
    <citation type="journal article" date="2009" name="Microbiology">
        <title>From a consortium sequence to a unified sequence: the Bacillus subtilis 168 reference genome a decade later.</title>
        <authorList>
            <person name="Barbe V."/>
            <person name="Cruveiller S."/>
            <person name="Kunst F."/>
            <person name="Lenoble P."/>
            <person name="Meurice G."/>
            <person name="Sekowska A."/>
            <person name="Vallenet D."/>
            <person name="Wang T."/>
            <person name="Moszer I."/>
            <person name="Medigue C."/>
            <person name="Danchin A."/>
        </authorList>
    </citation>
    <scope>SEQUENCE REVISION TO 47</scope>
</reference>